<name>M2_I000F</name>
<sequence>MSLLTEVETPTRNGWECSCSDSSDPLVIAASIIGILHFILWILDRLFFKCIYRRLKYGLKRGPSTEGVPKSMREEYRQEQQNAVDVDDGHFVNIELE</sequence>
<reference key="1">
    <citation type="journal article" date="1988" name="Virus Res.">
        <title>Nucleotide sequence of RNA segment 7 and the predicted amino sequence of M1 and M2 proteins of FPV/Weybridge (H7N7) and WSN (H1N1) influenza viruses.</title>
        <authorList>
            <person name="Markushin S."/>
            <person name="Ghiasi H."/>
            <person name="Sokolov N."/>
            <person name="Shilov A."/>
            <person name="Sinitsin B."/>
            <person name="Brown D."/>
            <person name="Klimov A."/>
            <person name="Nayak D."/>
        </authorList>
    </citation>
    <scope>NUCLEOTIDE SEQUENCE [GENOMIC RNA]</scope>
</reference>
<reference key="2">
    <citation type="journal article" date="1987" name="Bioorg. Khim.">
        <title>Comparative analysis of primary structure of M-genes in remantadine-resistant and remantadine-sensitive strains of influenza virus A/FPV/Weybridge (H7N7) strains.</title>
        <authorList>
            <person name="Karginov V.A."/>
            <person name="Blinov V.M."/>
            <person name="Safronov P.F."/>
            <person name="Mamaev L.V."/>
            <person name="Golovin S.Y."/>
            <person name="Netesov S.V."/>
            <person name="Samokhvalov E.I."/>
            <person name="Sharova N.K."/>
            <person name="Yuferov V.P."/>
            <person name="Urivaev L.V."/>
            <person name="Bukrinskaya A.G."/>
        </authorList>
    </citation>
    <scope>NUCLEOTIDE SEQUENCE [MRNA]</scope>
</reference>
<reference key="3">
    <citation type="journal article" date="2004" name="Virus Res.">
        <title>Assembly and budding of influenza virus.</title>
        <authorList>
            <person name="Nayak D.P."/>
            <person name="Hui E.K."/>
            <person name="Barman S."/>
        </authorList>
    </citation>
    <scope>REVIEW</scope>
</reference>
<reference key="4">
    <citation type="journal article" date="2003" name="FEBS Lett.">
        <title>Proton conduction through the M2 protein of the influenza A virus; a quantitative, mechanistic analysis of experimental data.</title>
        <authorList>
            <person name="Lear J.D."/>
        </authorList>
    </citation>
    <scope>REVIEW</scope>
</reference>
<reference key="5">
    <citation type="journal article" date="2003" name="FEBS Lett.">
        <title>Computational studies of proton transport through the M2 channel.</title>
        <authorList>
            <person name="Wu Y."/>
            <person name="Voth G.A."/>
        </authorList>
    </citation>
    <scope>REVIEW</scope>
</reference>
<organism>
    <name type="scientific">Influenza A virus (strain A/Chicken/Weybridge H7N7)</name>
    <name type="common">Influenza A virus (strain A/FPV/Weybridge H7N7)</name>
    <dbReference type="NCBI Taxonomy" id="11384"/>
    <lineage>
        <taxon>Viruses</taxon>
        <taxon>Riboviria</taxon>
        <taxon>Orthornavirae</taxon>
        <taxon>Negarnaviricota</taxon>
        <taxon>Polyploviricotina</taxon>
        <taxon>Insthoviricetes</taxon>
        <taxon>Articulavirales</taxon>
        <taxon>Orthomyxoviridae</taxon>
        <taxon>Alphainfluenzavirus</taxon>
        <taxon>Alphainfluenzavirus influenzae</taxon>
        <taxon>Influenza A virus</taxon>
    </lineage>
</organism>
<feature type="chain" id="PRO_0000078882" description="Matrix protein 2">
    <location>
        <begin position="1"/>
        <end position="97"/>
    </location>
</feature>
<feature type="topological domain" description="Virion surface" evidence="1">
    <location>
        <begin position="1"/>
        <end position="22"/>
    </location>
</feature>
<feature type="transmembrane region" description="Helical; Signal-anchor for type III membrane protein" evidence="1">
    <location>
        <begin position="23"/>
        <end position="43"/>
    </location>
</feature>
<feature type="topological domain" description="Intravirion" evidence="1">
    <location>
        <begin position="44"/>
        <end position="97"/>
    </location>
</feature>
<feature type="region of interest" description="Disordered" evidence="2">
    <location>
        <begin position="60"/>
        <end position="80"/>
    </location>
</feature>
<feature type="site" description="Essential for channel activity, possibly by being protonated during channel activation, and by forming the channel gate and the selective filter" evidence="1">
    <location>
        <position position="37"/>
    </location>
</feature>
<feature type="site" description="Seems to be involved in pH gating" evidence="1">
    <location>
        <position position="41"/>
    </location>
</feature>
<feature type="modified residue" description="Phosphoserine; by host" evidence="1">
    <location>
        <position position="64"/>
    </location>
</feature>
<feature type="lipid moiety-binding region" description="S-palmitoyl cysteine; by host" evidence="1">
    <location>
        <position position="50"/>
    </location>
</feature>
<feature type="disulfide bond" description="Interchain (with C-17)" evidence="1">
    <location>
        <position position="17"/>
    </location>
</feature>
<feature type="disulfide bond" description="Interchain (with C-19)" evidence="1">
    <location>
        <position position="19"/>
    </location>
</feature>
<feature type="sequence variant" description="In remantadine-resistant.">
    <original>S</original>
    <variation>N</variation>
    <location>
        <position position="31"/>
    </location>
</feature>
<feature type="sequence conflict" description="In Ref. 2; M38299." ref="2">
    <original>L</original>
    <variation>F</variation>
    <location>
        <position position="55"/>
    </location>
</feature>
<feature type="sequence conflict" description="In Ref. 2; M38299." ref="2">
    <original>K</original>
    <variation>E</variation>
    <location>
        <position position="70"/>
    </location>
</feature>
<accession>P05778</accession>
<comment type="function">
    <text evidence="1">Forms a proton-selective ion channel that is necessary for the efficient release of the viral genome during virus entry. After attaching to the cell surface, the virion enters the cell by endocytosis. Acidification of the endosome triggers M2 ion channel activity. The influx of protons into virion interior is believed to disrupt interactions between the viral ribonucleoprotein (RNP), matrix protein 1 (M1), and lipid bilayers, thereby freeing the viral genome from interaction with viral proteins and enabling RNA segments to migrate to the host cell nucleus, where influenza virus RNA transcription and replication occur. Also plays a role in viral proteins secretory pathway. Elevates the intravesicular pH of normally acidic compartments, such as trans-Golgi network, preventing newly formed hemagglutinin from premature switching to the fusion-active conformation.</text>
</comment>
<comment type="activity regulation">
    <text>The M2 protein from most influenza A strains is inhibited by amantadine and rimantadine, resulting in viral uncoating incapacity. Emergence of amantadine-resistant variants is usually rapid.</text>
</comment>
<comment type="subunit">
    <text evidence="1">Homotetramer; composed of two disulfide-linked dimers held together by non-covalent interactions. May interact with matrix protein 1.</text>
</comment>
<comment type="subcellular location">
    <subcellularLocation>
        <location evidence="1">Virion membrane</location>
    </subcellularLocation>
    <subcellularLocation>
        <location evidence="1">Host apical cell membrane</location>
        <topology evidence="1">Single-pass type III membrane protein</topology>
    </subcellularLocation>
    <text evidence="1">Abundantly expressed at the apical plasma membrane in infected polarized epithelial cells, in close proximity to budding and assembled virions. Minor component of virions (only 16-20 molecules/virion).</text>
</comment>
<comment type="alternative products">
    <event type="alternative splicing"/>
    <isoform>
        <id>P05778-1</id>
        <name>M2</name>
        <sequence type="displayed"/>
    </isoform>
    <isoform>
        <id>P05775-1</id>
        <name>M1</name>
        <sequence type="external"/>
    </isoform>
    <text>Only the first 9 residues are shared by the 2 isoforms.</text>
</comment>
<comment type="domain">
    <text evidence="1">Cytoplasmic tail plays an important role in virion assembly and morphogenesis.</text>
</comment>
<comment type="miscellaneous">
    <text evidence="1">When the channel is activated, one or more imidazole moieties of His-37 probably become bi-protonated.</text>
</comment>
<comment type="similarity">
    <text evidence="1">Belongs to the influenza viruses matrix protein M2 family.</text>
</comment>
<dbReference type="EMBL" id="M23921">
    <property type="protein sequence ID" value="AAA43273.1"/>
    <property type="molecule type" value="Genomic_RNA"/>
</dbReference>
<dbReference type="EMBL" id="M38299">
    <property type="status" value="NOT_ANNOTATED_CDS"/>
    <property type="molecule type" value="mRNA"/>
</dbReference>
<dbReference type="PIR" id="PN0084">
    <property type="entry name" value="PN0084"/>
</dbReference>
<dbReference type="SMR" id="P05778"/>
<dbReference type="IntAct" id="P05778">
    <property type="interactions" value="1"/>
</dbReference>
<dbReference type="BindingDB" id="P05778"/>
<dbReference type="DrugCentral" id="P05778"/>
<dbReference type="GO" id="GO:0020002">
    <property type="term" value="C:host cell plasma membrane"/>
    <property type="evidence" value="ECO:0007669"/>
    <property type="project" value="UniProtKB-SubCell"/>
</dbReference>
<dbReference type="GO" id="GO:0016020">
    <property type="term" value="C:membrane"/>
    <property type="evidence" value="ECO:0007669"/>
    <property type="project" value="UniProtKB-UniRule"/>
</dbReference>
<dbReference type="GO" id="GO:0055036">
    <property type="term" value="C:virion membrane"/>
    <property type="evidence" value="ECO:0007669"/>
    <property type="project" value="UniProtKB-SubCell"/>
</dbReference>
<dbReference type="GO" id="GO:0005216">
    <property type="term" value="F:monoatomic ion channel activity"/>
    <property type="evidence" value="ECO:0007669"/>
    <property type="project" value="UniProtKB-UniRule"/>
</dbReference>
<dbReference type="GO" id="GO:0015078">
    <property type="term" value="F:proton transmembrane transporter activity"/>
    <property type="evidence" value="ECO:0007669"/>
    <property type="project" value="UniProtKB-UniRule"/>
</dbReference>
<dbReference type="GO" id="GO:0051259">
    <property type="term" value="P:protein complex oligomerization"/>
    <property type="evidence" value="ECO:0007669"/>
    <property type="project" value="UniProtKB-UniRule"/>
</dbReference>
<dbReference type="GO" id="GO:0044694">
    <property type="term" value="P:symbiont genome entry into host cell via pore formation in plasma membrane"/>
    <property type="evidence" value="ECO:0007669"/>
    <property type="project" value="UniProtKB-UniRule"/>
</dbReference>
<dbReference type="GO" id="GO:0140321">
    <property type="term" value="P:symbiont-mediated suppression of host autophagy"/>
    <property type="evidence" value="ECO:0007669"/>
    <property type="project" value="UniProtKB-KW"/>
</dbReference>
<dbReference type="Gene3D" id="6.10.250.1640">
    <property type="match status" value="1"/>
</dbReference>
<dbReference type="HAMAP" id="MF_04069">
    <property type="entry name" value="INFV_M2"/>
    <property type="match status" value="1"/>
</dbReference>
<dbReference type="InterPro" id="IPR002089">
    <property type="entry name" value="Flu_M2"/>
</dbReference>
<dbReference type="Pfam" id="PF00599">
    <property type="entry name" value="Flu_M2"/>
    <property type="match status" value="1"/>
</dbReference>
<keyword id="KW-0025">Alternative splicing</keyword>
<keyword id="KW-1015">Disulfide bond</keyword>
<keyword id="KW-1032">Host cell membrane</keyword>
<keyword id="KW-1043">Host membrane</keyword>
<keyword id="KW-0945">Host-virus interaction</keyword>
<keyword id="KW-0375">Hydrogen ion transport</keyword>
<keyword id="KW-1083">Inhibition of host autophagy by virus</keyword>
<keyword id="KW-0407">Ion channel</keyword>
<keyword id="KW-0406">Ion transport</keyword>
<keyword id="KW-0449">Lipoprotein</keyword>
<keyword id="KW-0472">Membrane</keyword>
<keyword id="KW-0564">Palmitate</keyword>
<keyword id="KW-0597">Phosphoprotein</keyword>
<keyword id="KW-0735">Signal-anchor</keyword>
<keyword id="KW-0812">Transmembrane</keyword>
<keyword id="KW-1133">Transmembrane helix</keyword>
<keyword id="KW-0813">Transport</keyword>
<keyword id="KW-1182">Viral ion channel</keyword>
<keyword id="KW-0946">Virion</keyword>
<gene>
    <name evidence="1" type="primary">M</name>
</gene>
<proteinExistence type="inferred from homology"/>
<protein>
    <recommendedName>
        <fullName evidence="1">Matrix protein 2</fullName>
    </recommendedName>
    <alternativeName>
        <fullName evidence="1">Proton channel protein M2</fullName>
    </alternativeName>
</protein>
<evidence type="ECO:0000255" key="1">
    <source>
        <dbReference type="HAMAP-Rule" id="MF_04069"/>
    </source>
</evidence>
<evidence type="ECO:0000256" key="2">
    <source>
        <dbReference type="SAM" id="MobiDB-lite"/>
    </source>
</evidence>
<organismHost>
    <name type="scientific">Aves</name>
    <dbReference type="NCBI Taxonomy" id="8782"/>
</organismHost>
<organismHost>
    <name type="scientific">Equus caballus</name>
    <name type="common">Horse</name>
    <dbReference type="NCBI Taxonomy" id="9796"/>
</organismHost>
<organismHost>
    <name type="scientific">Homo sapiens</name>
    <name type="common">Human</name>
    <dbReference type="NCBI Taxonomy" id="9606"/>
</organismHost>
<organismHost>
    <name type="scientific">Phocidae</name>
    <name type="common">true seals</name>
    <dbReference type="NCBI Taxonomy" id="9709"/>
</organismHost>